<feature type="chain" id="PRO_0000425806" description="nebramycin 5' synthase">
    <location>
        <begin position="1"/>
        <end position="570"/>
    </location>
</feature>
<feature type="region of interest" description="Kae1-like">
    <location>
        <begin position="1"/>
        <end position="354"/>
    </location>
</feature>
<feature type="region of interest" description="YrdC-like">
    <location>
        <begin position="367"/>
        <end position="570"/>
    </location>
</feature>
<feature type="active site" description="Proton acceptor" evidence="4">
    <location>
        <position position="14"/>
    </location>
</feature>
<feature type="binding site" evidence="2 9">
    <location>
        <position position="12"/>
    </location>
    <ligand>
        <name>tobramycin</name>
        <dbReference type="ChEBI" id="CHEBI:73678"/>
    </ligand>
</feature>
<feature type="binding site" evidence="2 12">
    <location>
        <position position="39"/>
    </location>
    <ligand>
        <name>ATP</name>
        <dbReference type="ChEBI" id="CHEBI:30616"/>
    </ligand>
</feature>
<feature type="binding site" evidence="2 9">
    <location>
        <position position="114"/>
    </location>
    <ligand>
        <name>Fe cation</name>
        <dbReference type="ChEBI" id="CHEBI:24875"/>
    </ligand>
</feature>
<feature type="binding site" evidence="2 9">
    <location>
        <position position="118"/>
    </location>
    <ligand>
        <name>Fe cation</name>
        <dbReference type="ChEBI" id="CHEBI:24875"/>
    </ligand>
</feature>
<feature type="binding site" evidence="2 9">
    <location>
        <position position="137"/>
    </location>
    <ligand>
        <name>Fe cation</name>
        <dbReference type="ChEBI" id="CHEBI:24875"/>
    </ligand>
</feature>
<feature type="binding site" evidence="2 11">
    <location>
        <position position="139"/>
    </location>
    <ligand>
        <name>carbamoyl adenylate</name>
        <dbReference type="ChEBI" id="CHEBI:73674"/>
    </ligand>
</feature>
<feature type="binding site" evidence="2 11">
    <location>
        <position position="168"/>
    </location>
    <ligand>
        <name>carbamoyl adenylate</name>
        <dbReference type="ChEBI" id="CHEBI:73674"/>
    </ligand>
</feature>
<feature type="binding site" evidence="2 11">
    <location>
        <position position="172"/>
    </location>
    <ligand>
        <name>carbamoyl adenylate</name>
        <dbReference type="ChEBI" id="CHEBI:73674"/>
    </ligand>
</feature>
<feature type="binding site" evidence="2 9">
    <location>
        <position position="172"/>
    </location>
    <ligand>
        <name>tobramycin</name>
        <dbReference type="ChEBI" id="CHEBI:73678"/>
    </ligand>
</feature>
<feature type="binding site" evidence="2 9">
    <location>
        <position position="228"/>
    </location>
    <ligand>
        <name>tobramycin</name>
        <dbReference type="ChEBI" id="CHEBI:73678"/>
    </ligand>
</feature>
<feature type="binding site" evidence="2 11">
    <location>
        <position position="310"/>
    </location>
    <ligand>
        <name>carbamoyl adenylate</name>
        <dbReference type="ChEBI" id="CHEBI:73674"/>
    </ligand>
</feature>
<feature type="binding site" evidence="2 11">
    <location>
        <position position="314"/>
    </location>
    <ligand>
        <name>carbamoyl adenylate</name>
        <dbReference type="ChEBI" id="CHEBI:73674"/>
    </ligand>
</feature>
<feature type="binding site" evidence="2 9">
    <location>
        <position position="338"/>
    </location>
    <ligand>
        <name>Fe cation</name>
        <dbReference type="ChEBI" id="CHEBI:24875"/>
    </ligand>
</feature>
<feature type="binding site" evidence="2 9">
    <location>
        <begin position="418"/>
        <end position="419"/>
    </location>
    <ligand>
        <name>carbamoyl phosphate</name>
        <dbReference type="ChEBI" id="CHEBI:58228"/>
    </ligand>
</feature>
<feature type="binding site" evidence="2 12">
    <location>
        <position position="418"/>
    </location>
    <ligand>
        <name>ATP</name>
        <dbReference type="ChEBI" id="CHEBI:30616"/>
    </ligand>
</feature>
<feature type="binding site" evidence="2 12">
    <location>
        <position position="449"/>
    </location>
    <ligand>
        <name>ATP</name>
        <dbReference type="ChEBI" id="CHEBI:30616"/>
    </ligand>
</feature>
<feature type="binding site" evidence="2 9">
    <location>
        <position position="498"/>
    </location>
    <ligand>
        <name>carbamoyl phosphate</name>
        <dbReference type="ChEBI" id="CHEBI:58228"/>
    </ligand>
</feature>
<feature type="binding site" evidence="2 9">
    <location>
        <begin position="528"/>
        <end position="530"/>
    </location>
    <ligand>
        <name>carbamoyl phosphate</name>
        <dbReference type="ChEBI" id="CHEBI:58228"/>
    </ligand>
</feature>
<feature type="mutagenesis site" description="Shows negligible tobramycin carbamoylation activity." evidence="2">
    <original>H</original>
    <variation>N</variation>
    <location>
        <position position="14"/>
    </location>
</feature>
<feature type="mutagenesis site" description="The nucleotide binds in a similar fashion to ACP in wild-type, but the positions of the beta- and gamma-phosphorus atoms are shifted, so that the magnesium ion no longer coordinates the gamma-phosphate and the mutant is unable to catalyze the adenylation." evidence="2">
    <original>K</original>
    <variation>A</variation>
    <location>
        <position position="443"/>
    </location>
</feature>
<feature type="mutagenesis site" description="Binds carbamoyl phosphate, but not nucleotide, so that the mutant is unable to catalyze the adenylation." evidence="2">
    <original>M</original>
    <variation>I</variation>
    <location>
        <position position="473"/>
    </location>
</feature>
<feature type="mutagenesis site" description="Binds carbamoyl phosphate, but not nucleotide, so that the mutant is unable to catalyze the adenylation." evidence="2">
    <original>S</original>
    <variation>A</variation>
    <location>
        <position position="530"/>
    </location>
</feature>
<feature type="strand" evidence="15">
    <location>
        <begin position="2"/>
        <end position="7"/>
    </location>
</feature>
<feature type="strand" evidence="15">
    <location>
        <begin position="10"/>
        <end position="12"/>
    </location>
</feature>
<feature type="strand" evidence="15">
    <location>
        <begin position="17"/>
        <end position="22"/>
    </location>
</feature>
<feature type="strand" evidence="15">
    <location>
        <begin position="25"/>
        <end position="31"/>
    </location>
</feature>
<feature type="helix" evidence="15">
    <location>
        <begin position="32"/>
        <end position="36"/>
    </location>
</feature>
<feature type="helix" evidence="16">
    <location>
        <begin position="39"/>
        <end position="41"/>
    </location>
</feature>
<feature type="helix" evidence="15">
    <location>
        <begin position="47"/>
        <end position="57"/>
    </location>
</feature>
<feature type="helix" evidence="15">
    <location>
        <begin position="61"/>
        <end position="63"/>
    </location>
</feature>
<feature type="strand" evidence="15">
    <location>
        <begin position="65"/>
        <end position="71"/>
    </location>
</feature>
<feature type="helix" evidence="15">
    <location>
        <begin position="73"/>
        <end position="80"/>
    </location>
</feature>
<feature type="helix" evidence="15">
    <location>
        <begin position="88"/>
        <end position="95"/>
    </location>
</feature>
<feature type="turn" evidence="15">
    <location>
        <begin position="98"/>
        <end position="100"/>
    </location>
</feature>
<feature type="strand" evidence="15">
    <location>
        <begin position="109"/>
        <end position="111"/>
    </location>
</feature>
<feature type="helix" evidence="15">
    <location>
        <begin position="114"/>
        <end position="123"/>
    </location>
</feature>
<feature type="turn" evidence="17">
    <location>
        <begin position="124"/>
        <end position="127"/>
    </location>
</feature>
<feature type="strand" evidence="15">
    <location>
        <begin position="129"/>
        <end position="136"/>
    </location>
</feature>
<feature type="strand" evidence="15">
    <location>
        <begin position="140"/>
        <end position="151"/>
    </location>
</feature>
<feature type="strand" evidence="15">
    <location>
        <begin position="154"/>
        <end position="162"/>
    </location>
</feature>
<feature type="helix" evidence="15">
    <location>
        <begin position="163"/>
        <end position="165"/>
    </location>
</feature>
<feature type="helix" evidence="15">
    <location>
        <begin position="167"/>
        <end position="177"/>
    </location>
</feature>
<feature type="helix" evidence="15">
    <location>
        <begin position="185"/>
        <end position="192"/>
    </location>
</feature>
<feature type="turn" evidence="15">
    <location>
        <begin position="200"/>
        <end position="204"/>
    </location>
</feature>
<feature type="strand" evidence="15">
    <location>
        <begin position="205"/>
        <end position="208"/>
    </location>
</feature>
<feature type="strand" evidence="15">
    <location>
        <begin position="211"/>
        <end position="214"/>
    </location>
</feature>
<feature type="strand" evidence="15">
    <location>
        <begin position="226"/>
        <end position="229"/>
    </location>
</feature>
<feature type="helix" evidence="15">
    <location>
        <begin position="230"/>
        <end position="244"/>
    </location>
</feature>
<feature type="strand" evidence="15">
    <location>
        <begin position="245"/>
        <end position="247"/>
    </location>
</feature>
<feature type="strand" evidence="15">
    <location>
        <begin position="252"/>
        <end position="256"/>
    </location>
</feature>
<feature type="turn" evidence="15">
    <location>
        <begin position="258"/>
        <end position="260"/>
    </location>
</feature>
<feature type="strand" evidence="15">
    <location>
        <begin position="261"/>
        <end position="269"/>
    </location>
</feature>
<feature type="helix" evidence="15">
    <location>
        <begin position="271"/>
        <end position="274"/>
    </location>
</feature>
<feature type="helix" evidence="15">
    <location>
        <begin position="275"/>
        <end position="300"/>
    </location>
</feature>
<feature type="strand" evidence="15">
    <location>
        <begin position="303"/>
        <end position="309"/>
    </location>
</feature>
<feature type="helix" evidence="15">
    <location>
        <begin position="310"/>
        <end position="313"/>
    </location>
</feature>
<feature type="helix" evidence="15">
    <location>
        <begin position="315"/>
        <end position="322"/>
    </location>
</feature>
<feature type="strand" evidence="15">
    <location>
        <begin position="328"/>
        <end position="331"/>
    </location>
</feature>
<feature type="turn" evidence="17">
    <location>
        <begin position="334"/>
        <end position="337"/>
    </location>
</feature>
<feature type="helix" evidence="15">
    <location>
        <begin position="338"/>
        <end position="340"/>
    </location>
</feature>
<feature type="helix" evidence="15">
    <location>
        <begin position="341"/>
        <end position="352"/>
    </location>
</feature>
<feature type="helix" evidence="15">
    <location>
        <begin position="372"/>
        <end position="382"/>
    </location>
</feature>
<feature type="helix" evidence="15">
    <location>
        <begin position="392"/>
        <end position="401"/>
    </location>
</feature>
<feature type="strand" evidence="15">
    <location>
        <begin position="406"/>
        <end position="409"/>
    </location>
</feature>
<feature type="strand" evidence="15">
    <location>
        <begin position="416"/>
        <end position="418"/>
    </location>
</feature>
<feature type="strand" evidence="15">
    <location>
        <begin position="421"/>
        <end position="430"/>
    </location>
</feature>
<feature type="helix" evidence="15">
    <location>
        <begin position="434"/>
        <end position="440"/>
    </location>
</feature>
<feature type="turn" evidence="19">
    <location>
        <begin position="441"/>
        <end position="443"/>
    </location>
</feature>
<feature type="strand" evidence="15">
    <location>
        <begin position="453"/>
        <end position="456"/>
    </location>
</feature>
<feature type="helix" evidence="15">
    <location>
        <begin position="457"/>
        <end position="463"/>
    </location>
</feature>
<feature type="strand" evidence="15">
    <location>
        <begin position="464"/>
        <end position="466"/>
    </location>
</feature>
<feature type="strand" evidence="15">
    <location>
        <begin position="477"/>
        <end position="479"/>
    </location>
</feature>
<feature type="helix" evidence="15">
    <location>
        <begin position="481"/>
        <end position="483"/>
    </location>
</feature>
<feature type="turn" evidence="15">
    <location>
        <begin position="484"/>
        <end position="486"/>
    </location>
</feature>
<feature type="turn" evidence="15">
    <location>
        <begin position="488"/>
        <end position="490"/>
    </location>
</feature>
<feature type="strand" evidence="15">
    <location>
        <begin position="495"/>
        <end position="497"/>
    </location>
</feature>
<feature type="strand" evidence="15">
    <location>
        <begin position="500"/>
        <end position="502"/>
    </location>
</feature>
<feature type="turn" evidence="15">
    <location>
        <begin position="504"/>
        <end position="506"/>
    </location>
</feature>
<feature type="helix" evidence="15">
    <location>
        <begin position="508"/>
        <end position="521"/>
    </location>
</feature>
<feature type="strand" evidence="15">
    <location>
        <begin position="525"/>
        <end position="532"/>
    </location>
</feature>
<feature type="strand" evidence="18">
    <location>
        <begin position="534"/>
        <end position="536"/>
    </location>
</feature>
<feature type="helix" evidence="15">
    <location>
        <begin position="542"/>
        <end position="551"/>
    </location>
</feature>
<feature type="strand" evidence="15">
    <location>
        <begin position="555"/>
        <end position="559"/>
    </location>
</feature>
<feature type="strand" evidence="15">
    <location>
        <begin position="562"/>
        <end position="565"/>
    </location>
</feature>
<keyword id="KW-0002">3D-structure</keyword>
<keyword id="KW-0045">Antibiotic biosynthesis</keyword>
<keyword id="KW-0067">ATP-binding</keyword>
<keyword id="KW-0378">Hydrolase</keyword>
<keyword id="KW-0408">Iron</keyword>
<keyword id="KW-0436">Ligase</keyword>
<keyword id="KW-0479">Metal-binding</keyword>
<keyword id="KW-0547">Nucleotide-binding</keyword>
<organism>
    <name type="scientific">Streptoalloteichus tenebrarius (strain ATCC 17920 / DSM 40477 / JCM 4838 / CBS 697.72 / NBRC 16177 / NCIMB 11028 / NRRL B-12390 / A12253. 1 / ISP 5477)</name>
    <name type="common">Streptomyces tenebrarius</name>
    <dbReference type="NCBI Taxonomy" id="1933"/>
    <lineage>
        <taxon>Bacteria</taxon>
        <taxon>Bacillati</taxon>
        <taxon>Actinomycetota</taxon>
        <taxon>Actinomycetes</taxon>
        <taxon>Pseudonocardiales</taxon>
        <taxon>Pseudonocardiaceae</taxon>
        <taxon>Streptoalloteichus</taxon>
    </lineage>
</organism>
<gene>
    <name type="primary">tobZ</name>
    <name type="synonym">tacA</name>
</gene>
<sequence>MRVLGLNGWPRDFHDASAALLVDGRIAAFAEEERFTRKKHGYNTAPVQAAAFCLAQAGLTVDDLDAVAFGWDLPAMYRERLGGWPHSDSEALDILLPRDVFPRRTDPPLHFVQHHLAHAASAYYFSGEDRGAVLIVDGQGEEECVTLAHAEGGKITVLDTVPGAWSLGFFYEHVSEYTGLGGDNPGKLMGLAAHGTTVDETLSAFAFDSDGYRLNLIDPQARDPEDWDEYSVTERAWFAHLERIYRLPPNEFVRRYDPAKGRVVRDTRRDPYEYRDLAATAQAALERAVFGLADSVLARTGERTLFVAGGVGLNATMNGKLLTRSTVDKMFVPPVASDIGVSLGAAAAVAVELGDRIAPMGDTAAWGPEFSPDQVRAALDRTGLAYREPANLEREVAALIASGKVVGWAQGRGEVGPRALGQRSLLGSAHSPTMRDHINLRVKDREWWRPFAPSMLRSVSDQVLEVDADFPYMIMTTKVRAAYAERLPSVVHEDWSTRPQTVTEASNPRYHRMLTELGDLVGDPVCLNTSFNDRGEPIVSSPADALLTFSRLPIDALAVGPYLVTKDLRH</sequence>
<accession>Q70IY1</accession>
<accession>Q2MF18</accession>
<reference key="1">
    <citation type="journal article" date="2004" name="FEMS Microbiol. Lett.">
        <title>Isolation and characterization of the tobramycin biosynthetic gene cluster from Streptomyces tenebrarius.</title>
        <authorList>
            <person name="Kharel M.K."/>
            <person name="Basnet D.B."/>
            <person name="Lee H.C."/>
            <person name="Liou K."/>
            <person name="Woo J.S."/>
            <person name="Kim B.-G."/>
            <person name="Sohng J.K."/>
        </authorList>
    </citation>
    <scope>NUCLEOTIDE SEQUENCE [GENOMIC DNA]</scope>
    <source>
        <strain>ATCC 17920 / DSM 40477 / JCM 4838 / CBS 697.72 / NBRC 16177 / NCIMB 11028 / NRRL B-12390 / A12253. 1 / ISP 5477</strain>
    </source>
</reference>
<reference key="2">
    <citation type="submission" date="2004-08" db="EMBL/GenBank/DDBJ databases">
        <title>Comparison of the gene clusters for the biosynthesis of the aminoglycoside antibiotics tobramycin-apramycin (Streptomyces tenebrarius DSM 40477), and hygromycin B (Streptomyces hygroscopicus subsp. hygroscopicus DSM 40578).</title>
        <authorList>
            <person name="Aboshanab K."/>
            <person name="Schmidt-Beissner H."/>
            <person name="Wehmeier U."/>
            <person name="Welzel K."/>
            <person name="Vente A."/>
            <person name="Piepersberg W."/>
        </authorList>
    </citation>
    <scope>NUCLEOTIDE SEQUENCE [GENOMIC DNA]</scope>
    <source>
        <strain>ATCC 17920 / DSM 40477 / JCM 4838 / CBS 697.72 / NBRC 16177 / NCIMB 11028 / NRRL B-12390 / A12253. 1 / ISP 5477</strain>
    </source>
</reference>
<reference key="3">
    <citation type="journal article" date="2011" name="Appl. Microbiol. Biotechnol.">
        <title>Construction of kanamycin B overproducing strain by genetic engineering of Streptomyces tenebrarius.</title>
        <authorList>
            <person name="Ni X."/>
            <person name="Li D."/>
            <person name="Yang L."/>
            <person name="Huang T."/>
            <person name="Li H."/>
            <person name="Xia H."/>
        </authorList>
    </citation>
    <scope>FUNCTION</scope>
    <scope>DISRUPTION PHENOTYPE</scope>
    <source>
        <strain>H6</strain>
    </source>
</reference>
<reference evidence="5 6 7 8 9 10 11 12 13 14" key="4">
    <citation type="journal article" date="2012" name="Angew. Chem. Int. Ed.">
        <title>The O-carbamoyltransferase TobZ catalyzes an ancient enzymatic reaction.</title>
        <authorList>
            <person name="Parthier C."/>
            <person name="Gorlich S."/>
            <person name="Jaenecke F."/>
            <person name="Breithaupt C."/>
            <person name="Brauer U."/>
            <person name="Fandrich U."/>
            <person name="Clausnitzer D."/>
            <person name="Wehmeier U.F."/>
            <person name="Bottcher C."/>
            <person name="Scheel D."/>
            <person name="Stubbs M.T."/>
        </authorList>
    </citation>
    <scope>X-RAY CRYSTALLOGRAPHY (1.57 ANGSTROMS) OF WILD-TYPE AND MUTANTS ASN-14; ALA-443; ILE-473 AND ALA-530 IN COMPLEXES WITH ATP</scope>
    <scope>ADP; CARBAMOYL ADENYLATE; CARBAMOYL PHOSPHATE; TOBRAMYCIN AND IRON ION</scope>
    <scope>FUNCTION</scope>
    <scope>CATALYTIC ACTIVITY</scope>
    <scope>ACTIVE SITE</scope>
    <scope>MUTAGENESIS OF HIS-14; LYS-443; MET-473 AND SER-530</scope>
    <scope>ACTIVITY REGULATION</scope>
    <scope>REACTION MECHANISM</scope>
    <scope>COFACTOR</scope>
    <scope>SUBSTRATE SPECIFICITY</scope>
</reference>
<proteinExistence type="evidence at protein level"/>
<dbReference type="EC" id="6.1.2.2"/>
<dbReference type="EMBL" id="AJ579650">
    <property type="protein sequence ID" value="CAE22473.1"/>
    <property type="molecule type" value="Genomic_RNA"/>
</dbReference>
<dbReference type="EMBL" id="AJ810851">
    <property type="protein sequence ID" value="CAH18554.1"/>
    <property type="molecule type" value="Genomic_DNA"/>
</dbReference>
<dbReference type="RefSeq" id="WP_253672091.1">
    <property type="nucleotide sequence ID" value="NZ_JAMTCP010000038.1"/>
</dbReference>
<dbReference type="PDB" id="3VEN">
    <property type="method" value="X-ray"/>
    <property type="resolution" value="1.57 A"/>
    <property type="chains" value="A=1-570"/>
</dbReference>
<dbReference type="PDB" id="3VEO">
    <property type="method" value="X-ray"/>
    <property type="resolution" value="2.19 A"/>
    <property type="chains" value="A=1-570"/>
</dbReference>
<dbReference type="PDB" id="3VER">
    <property type="method" value="X-ray"/>
    <property type="resolution" value="2.34 A"/>
    <property type="chains" value="A=1-570"/>
</dbReference>
<dbReference type="PDB" id="3VES">
    <property type="method" value="X-ray"/>
    <property type="resolution" value="2.23 A"/>
    <property type="chains" value="A=1-570"/>
</dbReference>
<dbReference type="PDB" id="3VET">
    <property type="method" value="X-ray"/>
    <property type="resolution" value="2.20 A"/>
    <property type="chains" value="A=1-570"/>
</dbReference>
<dbReference type="PDB" id="3VEW">
    <property type="method" value="X-ray"/>
    <property type="resolution" value="2.35 A"/>
    <property type="chains" value="A=1-570"/>
</dbReference>
<dbReference type="PDB" id="3VEX">
    <property type="method" value="X-ray"/>
    <property type="resolution" value="1.90 A"/>
    <property type="chains" value="A=1-570"/>
</dbReference>
<dbReference type="PDB" id="3VEZ">
    <property type="method" value="X-ray"/>
    <property type="resolution" value="2.40 A"/>
    <property type="chains" value="A=1-570"/>
</dbReference>
<dbReference type="PDB" id="3VF2">
    <property type="method" value="X-ray"/>
    <property type="resolution" value="2.90 A"/>
    <property type="chains" value="A=1-570"/>
</dbReference>
<dbReference type="PDB" id="3VF4">
    <property type="method" value="X-ray"/>
    <property type="resolution" value="2.40 A"/>
    <property type="chains" value="A=1-570"/>
</dbReference>
<dbReference type="PDBsum" id="3VEN"/>
<dbReference type="PDBsum" id="3VEO"/>
<dbReference type="PDBsum" id="3VER"/>
<dbReference type="PDBsum" id="3VES"/>
<dbReference type="PDBsum" id="3VET"/>
<dbReference type="PDBsum" id="3VEW"/>
<dbReference type="PDBsum" id="3VEX"/>
<dbReference type="PDBsum" id="3VEZ"/>
<dbReference type="PDBsum" id="3VF2"/>
<dbReference type="PDBsum" id="3VF4"/>
<dbReference type="SMR" id="Q70IY1"/>
<dbReference type="KEGG" id="ag:CAE22473"/>
<dbReference type="BioCyc" id="MetaCyc:MONOMER-17235"/>
<dbReference type="UniPathway" id="UPA00965"/>
<dbReference type="UniPathway" id="UPA00971"/>
<dbReference type="EvolutionaryTrace" id="Q70IY1"/>
<dbReference type="GO" id="GO:0005524">
    <property type="term" value="F:ATP binding"/>
    <property type="evidence" value="ECO:0000314"/>
    <property type="project" value="UniProtKB"/>
</dbReference>
<dbReference type="GO" id="GO:0016743">
    <property type="term" value="F:carboxyl- or carbamoyltransferase activity"/>
    <property type="evidence" value="ECO:0000314"/>
    <property type="project" value="UniProtKB"/>
</dbReference>
<dbReference type="GO" id="GO:0016787">
    <property type="term" value="F:hydrolase activity"/>
    <property type="evidence" value="ECO:0007669"/>
    <property type="project" value="UniProtKB-KW"/>
</dbReference>
<dbReference type="GO" id="GO:0005506">
    <property type="term" value="F:iron ion binding"/>
    <property type="evidence" value="ECO:0000314"/>
    <property type="project" value="UniProtKB"/>
</dbReference>
<dbReference type="GO" id="GO:0016874">
    <property type="term" value="F:ligase activity"/>
    <property type="evidence" value="ECO:0007669"/>
    <property type="project" value="UniProtKB-KW"/>
</dbReference>
<dbReference type="GO" id="GO:1901133">
    <property type="term" value="P:kanamycin biosynthetic process"/>
    <property type="evidence" value="ECO:0000314"/>
    <property type="project" value="UniProtKB"/>
</dbReference>
<dbReference type="GO" id="GO:1901121">
    <property type="term" value="P:tobramycin biosynthetic process"/>
    <property type="evidence" value="ECO:0000314"/>
    <property type="project" value="UniProtKB"/>
</dbReference>
<dbReference type="CDD" id="cd24098">
    <property type="entry name" value="ASKHA_NBD_TobZ_N"/>
    <property type="match status" value="1"/>
</dbReference>
<dbReference type="FunFam" id="3.90.870.20:FF:000001">
    <property type="entry name" value="Decarbamoylnovobiocin carbamoyltransferase"/>
    <property type="match status" value="1"/>
</dbReference>
<dbReference type="Gene3D" id="3.30.420.40">
    <property type="match status" value="2"/>
</dbReference>
<dbReference type="Gene3D" id="3.90.870.20">
    <property type="entry name" value="Carbamoyltransferase, C-terminal domain"/>
    <property type="match status" value="1"/>
</dbReference>
<dbReference type="InterPro" id="IPR043129">
    <property type="entry name" value="ATPase_NBD"/>
</dbReference>
<dbReference type="InterPro" id="IPR031730">
    <property type="entry name" value="Carbam_trans_C"/>
</dbReference>
<dbReference type="InterPro" id="IPR038152">
    <property type="entry name" value="Carbam_trans_C_sf"/>
</dbReference>
<dbReference type="InterPro" id="IPR003696">
    <property type="entry name" value="Carbtransf_dom"/>
</dbReference>
<dbReference type="InterPro" id="IPR051338">
    <property type="entry name" value="NodU/CmcH_Carbamoyltrnsfr"/>
</dbReference>
<dbReference type="PANTHER" id="PTHR34847">
    <property type="entry name" value="NODULATION PROTEIN U"/>
    <property type="match status" value="1"/>
</dbReference>
<dbReference type="PANTHER" id="PTHR34847:SF1">
    <property type="entry name" value="NODULATION PROTEIN U"/>
    <property type="match status" value="1"/>
</dbReference>
<dbReference type="Pfam" id="PF16861">
    <property type="entry name" value="Carbam_trans_C"/>
    <property type="match status" value="1"/>
</dbReference>
<dbReference type="Pfam" id="PF02543">
    <property type="entry name" value="Carbam_trans_N"/>
    <property type="match status" value="2"/>
</dbReference>
<dbReference type="SUPFAM" id="SSF53067">
    <property type="entry name" value="Actin-like ATPase domain"/>
    <property type="match status" value="1"/>
</dbReference>
<comment type="function">
    <text evidence="1 2">TobZ is involved in the biosynthesis of the 2-deoxystreptamine-containing aminoglycoside antibiotics such as nebramycin 5 and 6-O-carbamoylkanamycin. Catalyzes the hydrolysis of carbamoyl phosphate and its subsequent adenylation by ATP to yield O-carbamoyladenylate. Then it catalyzes the transfer of the carbamoyl moiety from O-carbamoyladenylate to the tobramycin 6-hydroxy group to yield nebramycin 5'. It catalyzes the same reaction with kanamycin A. These reactions are considerably slower in the presence of deoxy-ATP.</text>
</comment>
<comment type="catalytic activity">
    <reaction evidence="2">
        <text>tobramycin + carbamoyl phosphate + ATP + H2O = nebramycin 5' + AMP + phosphate + diphosphate + H(+)</text>
        <dbReference type="Rhea" id="RHEA:42096"/>
        <dbReference type="ChEBI" id="CHEBI:15377"/>
        <dbReference type="ChEBI" id="CHEBI:15378"/>
        <dbReference type="ChEBI" id="CHEBI:30616"/>
        <dbReference type="ChEBI" id="CHEBI:33019"/>
        <dbReference type="ChEBI" id="CHEBI:43474"/>
        <dbReference type="ChEBI" id="CHEBI:58228"/>
        <dbReference type="ChEBI" id="CHEBI:73678"/>
        <dbReference type="ChEBI" id="CHEBI:73679"/>
        <dbReference type="ChEBI" id="CHEBI:456215"/>
        <dbReference type="EC" id="6.1.2.2"/>
    </reaction>
    <physiologicalReaction direction="left-to-right" evidence="4">
        <dbReference type="Rhea" id="RHEA:42097"/>
    </physiologicalReaction>
</comment>
<comment type="catalytic activity">
    <reaction evidence="2">
        <text>kanamycin A + carbamoyl phosphate + ATP + H2O = 6''-O-carbamoylkanamycin A + AMP + phosphate + diphosphate + H(+)</text>
        <dbReference type="Rhea" id="RHEA:42100"/>
        <dbReference type="ChEBI" id="CHEBI:15377"/>
        <dbReference type="ChEBI" id="CHEBI:15378"/>
        <dbReference type="ChEBI" id="CHEBI:30616"/>
        <dbReference type="ChEBI" id="CHEBI:33019"/>
        <dbReference type="ChEBI" id="CHEBI:43474"/>
        <dbReference type="ChEBI" id="CHEBI:58214"/>
        <dbReference type="ChEBI" id="CHEBI:58228"/>
        <dbReference type="ChEBI" id="CHEBI:73675"/>
        <dbReference type="ChEBI" id="CHEBI:456215"/>
        <dbReference type="EC" id="6.1.2.2"/>
    </reaction>
    <physiologicalReaction direction="left-to-right" evidence="4">
        <dbReference type="Rhea" id="RHEA:42101"/>
    </physiologicalReaction>
</comment>
<comment type="catalytic activity">
    <reaction evidence="2">
        <text>carbamoyl phosphate + ATP + H2O = carbamoyl adenylate + phosphate + diphosphate</text>
        <dbReference type="Rhea" id="RHEA:36375"/>
        <dbReference type="ChEBI" id="CHEBI:15377"/>
        <dbReference type="ChEBI" id="CHEBI:30616"/>
        <dbReference type="ChEBI" id="CHEBI:33019"/>
        <dbReference type="ChEBI" id="CHEBI:43474"/>
        <dbReference type="ChEBI" id="CHEBI:58228"/>
        <dbReference type="ChEBI" id="CHEBI:73674"/>
    </reaction>
    <physiologicalReaction direction="left-to-right" evidence="4">
        <dbReference type="Rhea" id="RHEA:36376"/>
    </physiologicalReaction>
</comment>
<comment type="catalytic activity">
    <reaction evidence="2">
        <text>tobramycin + carbamoyl adenylate = nebramycin 5' + AMP + H(+)</text>
        <dbReference type="Rhea" id="RHEA:36383"/>
        <dbReference type="ChEBI" id="CHEBI:15378"/>
        <dbReference type="ChEBI" id="CHEBI:73674"/>
        <dbReference type="ChEBI" id="CHEBI:73678"/>
        <dbReference type="ChEBI" id="CHEBI:73679"/>
        <dbReference type="ChEBI" id="CHEBI:456215"/>
    </reaction>
    <physiologicalReaction direction="left-to-right" evidence="4">
        <dbReference type="Rhea" id="RHEA:36384"/>
    </physiologicalReaction>
</comment>
<comment type="catalytic activity">
    <reaction evidence="2">
        <text>carbamoyl adenylate + kanamycin A = 6''-O-carbamoylkanamycin A + AMP + H(+)</text>
        <dbReference type="Rhea" id="RHEA:36387"/>
        <dbReference type="ChEBI" id="CHEBI:15378"/>
        <dbReference type="ChEBI" id="CHEBI:58214"/>
        <dbReference type="ChEBI" id="CHEBI:73674"/>
        <dbReference type="ChEBI" id="CHEBI:73675"/>
        <dbReference type="ChEBI" id="CHEBI:456215"/>
    </reaction>
    <physiologicalReaction direction="left-to-right" evidence="4">
        <dbReference type="Rhea" id="RHEA:36388"/>
    </physiologicalReaction>
</comment>
<comment type="cofactor">
    <cofactor evidence="2">
        <name>Fe(2+)</name>
        <dbReference type="ChEBI" id="CHEBI:29033"/>
    </cofactor>
    <text evidence="2">Binds 1 Fe(2+) ion per subunit.</text>
</comment>
<comment type="activity regulation">
    <text evidence="2">ADP inhibits the formation of nebramycin 5'.</text>
</comment>
<comment type="pathway">
    <text>Antibiotic biosynthesis; kanamycin biosynthesis.</text>
</comment>
<comment type="pathway">
    <text>Antibiotic biosynthesis; tobramycin biosynthesis.</text>
</comment>
<comment type="domain">
    <text>Consists of two major domains: the N-terminal domain (Kae1-like) is involved in the transfer of carbamoyl from O-carbamoyladenylate to tobramycin or kanamycin; the C-terminal domain (YrdC-like) is involved in the hydrolysis of carbamoyl phosphate and its subsequent adenylation by ATP.</text>
</comment>
<comment type="disruption phenotype">
    <text evidence="1">Cells lacking this gene accumulate kanamycin.</text>
</comment>
<comment type="miscellaneous">
    <text evidence="4">It seems that TobZ plays a solely passive role in the adenylation reaction: all functional groups appear to be provided by the substrates themselves, representing an extreme form of substrate-assisted catalysis. The role of the iron in catalysis remains unclear (PubMed:22383337).</text>
</comment>
<comment type="similarity">
    <text evidence="3">Belongs to the NodU/CmcH family.</text>
</comment>
<evidence type="ECO:0000269" key="1">
    <source>
    </source>
</evidence>
<evidence type="ECO:0000269" key="2">
    <source>
    </source>
</evidence>
<evidence type="ECO:0000305" key="3"/>
<evidence type="ECO:0000305" key="4">
    <source>
    </source>
</evidence>
<evidence type="ECO:0007744" key="5">
    <source>
        <dbReference type="PDB" id="3VEN"/>
    </source>
</evidence>
<evidence type="ECO:0007744" key="6">
    <source>
        <dbReference type="PDB" id="3VEO"/>
    </source>
</evidence>
<evidence type="ECO:0007744" key="7">
    <source>
        <dbReference type="PDB" id="3VER"/>
    </source>
</evidence>
<evidence type="ECO:0007744" key="8">
    <source>
        <dbReference type="PDB" id="3VES"/>
    </source>
</evidence>
<evidence type="ECO:0007744" key="9">
    <source>
        <dbReference type="PDB" id="3VET"/>
    </source>
</evidence>
<evidence type="ECO:0007744" key="10">
    <source>
        <dbReference type="PDB" id="3VEW"/>
    </source>
</evidence>
<evidence type="ECO:0007744" key="11">
    <source>
        <dbReference type="PDB" id="3VEX"/>
    </source>
</evidence>
<evidence type="ECO:0007744" key="12">
    <source>
        <dbReference type="PDB" id="3VEZ"/>
    </source>
</evidence>
<evidence type="ECO:0007744" key="13">
    <source>
        <dbReference type="PDB" id="3VF2"/>
    </source>
</evidence>
<evidence type="ECO:0007744" key="14">
    <source>
        <dbReference type="PDB" id="3VF4"/>
    </source>
</evidence>
<evidence type="ECO:0007829" key="15">
    <source>
        <dbReference type="PDB" id="3VEN"/>
    </source>
</evidence>
<evidence type="ECO:0007829" key="16">
    <source>
        <dbReference type="PDB" id="3VET"/>
    </source>
</evidence>
<evidence type="ECO:0007829" key="17">
    <source>
        <dbReference type="PDB" id="3VEX"/>
    </source>
</evidence>
<evidence type="ECO:0007829" key="18">
    <source>
        <dbReference type="PDB" id="3VEZ"/>
    </source>
</evidence>
<evidence type="ECO:0007829" key="19">
    <source>
        <dbReference type="PDB" id="3VF4"/>
    </source>
</evidence>
<protein>
    <recommendedName>
        <fullName>nebramycin 5' synthase</fullName>
        <ecNumber>6.1.2.2</ecNumber>
    </recommendedName>
    <alternativeName>
        <fullName>Kanamycin A carbamoyltransferase</fullName>
    </alternativeName>
    <alternativeName>
        <fullName>Tobramycin carbamoyltransferase</fullName>
    </alternativeName>
</protein>
<name>TOBZ_STRSD</name>